<name>EX7S_SYNJB</name>
<reference key="1">
    <citation type="journal article" date="2007" name="ISME J.">
        <title>Population level functional diversity in a microbial community revealed by comparative genomic and metagenomic analyses.</title>
        <authorList>
            <person name="Bhaya D."/>
            <person name="Grossman A.R."/>
            <person name="Steunou A.-S."/>
            <person name="Khuri N."/>
            <person name="Cohan F.M."/>
            <person name="Hamamura N."/>
            <person name="Melendrez M.C."/>
            <person name="Bateson M.M."/>
            <person name="Ward D.M."/>
            <person name="Heidelberg J.F."/>
        </authorList>
    </citation>
    <scope>NUCLEOTIDE SEQUENCE [LARGE SCALE GENOMIC DNA]</scope>
    <source>
        <strain>JA-2-3B'a(2-13)</strain>
    </source>
</reference>
<sequence length="78" mass="9091">MSRRKREEPWRYEAAIAEVETLIAQIESGELDLAEVVERFQQAAQTLKTCADFLEQKRQQVEIIIEQLGQEEEDLPES</sequence>
<keyword id="KW-0963">Cytoplasm</keyword>
<keyword id="KW-0269">Exonuclease</keyword>
<keyword id="KW-0378">Hydrolase</keyword>
<keyword id="KW-0540">Nuclease</keyword>
<keyword id="KW-1185">Reference proteome</keyword>
<evidence type="ECO:0000255" key="1">
    <source>
        <dbReference type="HAMAP-Rule" id="MF_00337"/>
    </source>
</evidence>
<protein>
    <recommendedName>
        <fullName evidence="1">Exodeoxyribonuclease 7 small subunit</fullName>
        <ecNumber evidence="1">3.1.11.6</ecNumber>
    </recommendedName>
    <alternativeName>
        <fullName evidence="1">Exodeoxyribonuclease VII small subunit</fullName>
        <shortName evidence="1">Exonuclease VII small subunit</shortName>
    </alternativeName>
</protein>
<comment type="function">
    <text evidence="1">Bidirectionally degrades single-stranded DNA into large acid-insoluble oligonucleotides, which are then degraded further into small acid-soluble oligonucleotides.</text>
</comment>
<comment type="catalytic activity">
    <reaction evidence="1">
        <text>Exonucleolytic cleavage in either 5'- to 3'- or 3'- to 5'-direction to yield nucleoside 5'-phosphates.</text>
        <dbReference type="EC" id="3.1.11.6"/>
    </reaction>
</comment>
<comment type="subunit">
    <text evidence="1">Heterooligomer composed of large and small subunits.</text>
</comment>
<comment type="subcellular location">
    <subcellularLocation>
        <location evidence="1">Cytoplasm</location>
    </subcellularLocation>
</comment>
<comment type="similarity">
    <text evidence="1">Belongs to the XseB family.</text>
</comment>
<gene>
    <name evidence="1" type="primary">xseB</name>
    <name type="ordered locus">CYB_0089</name>
</gene>
<accession>Q2JQ26</accession>
<dbReference type="EC" id="3.1.11.6" evidence="1"/>
<dbReference type="EMBL" id="CP000240">
    <property type="protein sequence ID" value="ABD01090.1"/>
    <property type="molecule type" value="Genomic_DNA"/>
</dbReference>
<dbReference type="RefSeq" id="WP_011431761.1">
    <property type="nucleotide sequence ID" value="NC_007776.1"/>
</dbReference>
<dbReference type="SMR" id="Q2JQ26"/>
<dbReference type="STRING" id="321332.CYB_0089"/>
<dbReference type="KEGG" id="cyb:CYB_0089"/>
<dbReference type="eggNOG" id="COG1722">
    <property type="taxonomic scope" value="Bacteria"/>
</dbReference>
<dbReference type="HOGENOM" id="CLU_145918_1_0_3"/>
<dbReference type="OrthoDB" id="427334at2"/>
<dbReference type="Proteomes" id="UP000001938">
    <property type="component" value="Chromosome"/>
</dbReference>
<dbReference type="GO" id="GO:0005829">
    <property type="term" value="C:cytosol"/>
    <property type="evidence" value="ECO:0007669"/>
    <property type="project" value="TreeGrafter"/>
</dbReference>
<dbReference type="GO" id="GO:0009318">
    <property type="term" value="C:exodeoxyribonuclease VII complex"/>
    <property type="evidence" value="ECO:0007669"/>
    <property type="project" value="InterPro"/>
</dbReference>
<dbReference type="GO" id="GO:0008855">
    <property type="term" value="F:exodeoxyribonuclease VII activity"/>
    <property type="evidence" value="ECO:0007669"/>
    <property type="project" value="UniProtKB-UniRule"/>
</dbReference>
<dbReference type="GO" id="GO:0006308">
    <property type="term" value="P:DNA catabolic process"/>
    <property type="evidence" value="ECO:0007669"/>
    <property type="project" value="UniProtKB-UniRule"/>
</dbReference>
<dbReference type="Gene3D" id="1.10.287.1040">
    <property type="entry name" value="Exonuclease VII, small subunit"/>
    <property type="match status" value="1"/>
</dbReference>
<dbReference type="HAMAP" id="MF_00337">
    <property type="entry name" value="Exonuc_7_S"/>
    <property type="match status" value="1"/>
</dbReference>
<dbReference type="InterPro" id="IPR003761">
    <property type="entry name" value="Exonuc_VII_S"/>
</dbReference>
<dbReference type="InterPro" id="IPR037004">
    <property type="entry name" value="Exonuc_VII_ssu_sf"/>
</dbReference>
<dbReference type="NCBIfam" id="TIGR01280">
    <property type="entry name" value="xseB"/>
    <property type="match status" value="1"/>
</dbReference>
<dbReference type="PANTHER" id="PTHR34137">
    <property type="entry name" value="EXODEOXYRIBONUCLEASE 7 SMALL SUBUNIT"/>
    <property type="match status" value="1"/>
</dbReference>
<dbReference type="PANTHER" id="PTHR34137:SF1">
    <property type="entry name" value="EXODEOXYRIBONUCLEASE 7 SMALL SUBUNIT"/>
    <property type="match status" value="1"/>
</dbReference>
<dbReference type="Pfam" id="PF02609">
    <property type="entry name" value="Exonuc_VII_S"/>
    <property type="match status" value="1"/>
</dbReference>
<dbReference type="PIRSF" id="PIRSF006488">
    <property type="entry name" value="Exonuc_VII_S"/>
    <property type="match status" value="1"/>
</dbReference>
<dbReference type="SUPFAM" id="SSF116842">
    <property type="entry name" value="XseB-like"/>
    <property type="match status" value="1"/>
</dbReference>
<proteinExistence type="inferred from homology"/>
<organism>
    <name type="scientific">Synechococcus sp. (strain JA-2-3B'a(2-13))</name>
    <name type="common">Cyanobacteria bacterium Yellowstone B-Prime</name>
    <dbReference type="NCBI Taxonomy" id="321332"/>
    <lineage>
        <taxon>Bacteria</taxon>
        <taxon>Bacillati</taxon>
        <taxon>Cyanobacteriota</taxon>
        <taxon>Cyanophyceae</taxon>
        <taxon>Synechococcales</taxon>
        <taxon>Synechococcaceae</taxon>
        <taxon>Synechococcus</taxon>
    </lineage>
</organism>
<feature type="chain" id="PRO_1000019596" description="Exodeoxyribonuclease 7 small subunit">
    <location>
        <begin position="1"/>
        <end position="78"/>
    </location>
</feature>